<sequence>MARVTVEDCLEHVKNRFELVMVATKRARQIAVRGDQPMVEWENDKPTVVALREIAEGYVTADILDED</sequence>
<keyword id="KW-0240">DNA-directed RNA polymerase</keyword>
<keyword id="KW-0548">Nucleotidyltransferase</keyword>
<keyword id="KW-0804">Transcription</keyword>
<keyword id="KW-0808">Transferase</keyword>
<organism>
    <name type="scientific">Legionella pneumophila (strain Corby)</name>
    <dbReference type="NCBI Taxonomy" id="400673"/>
    <lineage>
        <taxon>Bacteria</taxon>
        <taxon>Pseudomonadati</taxon>
        <taxon>Pseudomonadota</taxon>
        <taxon>Gammaproteobacteria</taxon>
        <taxon>Legionellales</taxon>
        <taxon>Legionellaceae</taxon>
        <taxon>Legionella</taxon>
    </lineage>
</organism>
<proteinExistence type="inferred from homology"/>
<accession>A5IDJ2</accession>
<reference key="1">
    <citation type="submission" date="2006-11" db="EMBL/GenBank/DDBJ databases">
        <title>Identification and characterization of a new conjugation/ type IVA secretion system (trb/tra) of L. pneumophila Corby localized on a mobile genomic island.</title>
        <authorList>
            <person name="Gloeckner G."/>
            <person name="Albert-Weissenberger C."/>
            <person name="Weinmann E."/>
            <person name="Jacobi S."/>
            <person name="Schunder E."/>
            <person name="Steinert M."/>
            <person name="Buchrieser C."/>
            <person name="Hacker J."/>
            <person name="Heuner K."/>
        </authorList>
    </citation>
    <scope>NUCLEOTIDE SEQUENCE [LARGE SCALE GENOMIC DNA]</scope>
    <source>
        <strain>Corby</strain>
    </source>
</reference>
<gene>
    <name evidence="1" type="primary">rpoZ</name>
    <name type="ordered locus">LPC_1493</name>
</gene>
<feature type="chain" id="PRO_1000005950" description="DNA-directed RNA polymerase subunit omega">
    <location>
        <begin position="1"/>
        <end position="67"/>
    </location>
</feature>
<evidence type="ECO:0000255" key="1">
    <source>
        <dbReference type="HAMAP-Rule" id="MF_00366"/>
    </source>
</evidence>
<name>RPOZ_LEGPC</name>
<comment type="function">
    <text evidence="1">Promotes RNA polymerase assembly. Latches the N- and C-terminal regions of the beta' subunit thereby facilitating its interaction with the beta and alpha subunits.</text>
</comment>
<comment type="catalytic activity">
    <reaction evidence="1">
        <text>RNA(n) + a ribonucleoside 5'-triphosphate = RNA(n+1) + diphosphate</text>
        <dbReference type="Rhea" id="RHEA:21248"/>
        <dbReference type="Rhea" id="RHEA-COMP:14527"/>
        <dbReference type="Rhea" id="RHEA-COMP:17342"/>
        <dbReference type="ChEBI" id="CHEBI:33019"/>
        <dbReference type="ChEBI" id="CHEBI:61557"/>
        <dbReference type="ChEBI" id="CHEBI:140395"/>
        <dbReference type="EC" id="2.7.7.6"/>
    </reaction>
</comment>
<comment type="subunit">
    <text evidence="1">The RNAP catalytic core consists of 2 alpha, 1 beta, 1 beta' and 1 omega subunit. When a sigma factor is associated with the core the holoenzyme is formed, which can initiate transcription.</text>
</comment>
<comment type="similarity">
    <text evidence="1">Belongs to the RNA polymerase subunit omega family.</text>
</comment>
<dbReference type="EC" id="2.7.7.6" evidence="1"/>
<dbReference type="EMBL" id="CP000675">
    <property type="protein sequence ID" value="ABQ55442.1"/>
    <property type="molecule type" value="Genomic_DNA"/>
</dbReference>
<dbReference type="RefSeq" id="WP_011214258.1">
    <property type="nucleotide sequence ID" value="NZ_JAPMSS010000011.1"/>
</dbReference>
<dbReference type="SMR" id="A5IDJ2"/>
<dbReference type="GeneID" id="57036003"/>
<dbReference type="KEGG" id="lpc:LPC_1493"/>
<dbReference type="HOGENOM" id="CLU_125406_5_2_6"/>
<dbReference type="GO" id="GO:0000428">
    <property type="term" value="C:DNA-directed RNA polymerase complex"/>
    <property type="evidence" value="ECO:0007669"/>
    <property type="project" value="UniProtKB-KW"/>
</dbReference>
<dbReference type="GO" id="GO:0003677">
    <property type="term" value="F:DNA binding"/>
    <property type="evidence" value="ECO:0007669"/>
    <property type="project" value="UniProtKB-UniRule"/>
</dbReference>
<dbReference type="GO" id="GO:0003899">
    <property type="term" value="F:DNA-directed RNA polymerase activity"/>
    <property type="evidence" value="ECO:0007669"/>
    <property type="project" value="UniProtKB-UniRule"/>
</dbReference>
<dbReference type="GO" id="GO:0006351">
    <property type="term" value="P:DNA-templated transcription"/>
    <property type="evidence" value="ECO:0007669"/>
    <property type="project" value="UniProtKB-UniRule"/>
</dbReference>
<dbReference type="Gene3D" id="3.90.940.10">
    <property type="match status" value="1"/>
</dbReference>
<dbReference type="HAMAP" id="MF_00366">
    <property type="entry name" value="RNApol_bact_RpoZ"/>
    <property type="match status" value="1"/>
</dbReference>
<dbReference type="InterPro" id="IPR003716">
    <property type="entry name" value="DNA-dir_RNA_pol_omega"/>
</dbReference>
<dbReference type="InterPro" id="IPR006110">
    <property type="entry name" value="Pol_omega/Rpo6/RPB6"/>
</dbReference>
<dbReference type="InterPro" id="IPR036161">
    <property type="entry name" value="RPB6/omega-like_sf"/>
</dbReference>
<dbReference type="NCBIfam" id="TIGR00690">
    <property type="entry name" value="rpoZ"/>
    <property type="match status" value="1"/>
</dbReference>
<dbReference type="PANTHER" id="PTHR34476">
    <property type="entry name" value="DNA-DIRECTED RNA POLYMERASE SUBUNIT OMEGA"/>
    <property type="match status" value="1"/>
</dbReference>
<dbReference type="PANTHER" id="PTHR34476:SF1">
    <property type="entry name" value="DNA-DIRECTED RNA POLYMERASE SUBUNIT OMEGA"/>
    <property type="match status" value="1"/>
</dbReference>
<dbReference type="Pfam" id="PF01192">
    <property type="entry name" value="RNA_pol_Rpb6"/>
    <property type="match status" value="1"/>
</dbReference>
<dbReference type="SMART" id="SM01409">
    <property type="entry name" value="RNA_pol_Rpb6"/>
    <property type="match status" value="1"/>
</dbReference>
<dbReference type="SUPFAM" id="SSF63562">
    <property type="entry name" value="RPB6/omega subunit-like"/>
    <property type="match status" value="1"/>
</dbReference>
<protein>
    <recommendedName>
        <fullName evidence="1">DNA-directed RNA polymerase subunit omega</fullName>
        <shortName evidence="1">RNAP omega subunit</shortName>
        <ecNumber evidence="1">2.7.7.6</ecNumber>
    </recommendedName>
    <alternativeName>
        <fullName evidence="1">RNA polymerase omega subunit</fullName>
    </alternativeName>
    <alternativeName>
        <fullName evidence="1">Transcriptase subunit omega</fullName>
    </alternativeName>
</protein>